<comment type="function">
    <text evidence="1">Multifunctional regulator of fatty acid metabolism.</text>
</comment>
<comment type="subunit">
    <text evidence="1">Homodimer.</text>
</comment>
<comment type="subcellular location">
    <subcellularLocation>
        <location evidence="1">Cytoplasm</location>
    </subcellularLocation>
</comment>
<organism>
    <name type="scientific">Escherichia coli O7:K1 (strain IAI39 / ExPEC)</name>
    <dbReference type="NCBI Taxonomy" id="585057"/>
    <lineage>
        <taxon>Bacteria</taxon>
        <taxon>Pseudomonadati</taxon>
        <taxon>Pseudomonadota</taxon>
        <taxon>Gammaproteobacteria</taxon>
        <taxon>Enterobacterales</taxon>
        <taxon>Enterobacteriaceae</taxon>
        <taxon>Escherichia</taxon>
    </lineage>
</organism>
<protein>
    <recommendedName>
        <fullName evidence="1">Fatty acid metabolism regulator protein</fullName>
    </recommendedName>
</protein>
<dbReference type="EMBL" id="CU928164">
    <property type="protein sequence ID" value="CAR18014.1"/>
    <property type="molecule type" value="Genomic_DNA"/>
</dbReference>
<dbReference type="RefSeq" id="WP_000234823.1">
    <property type="nucleotide sequence ID" value="NC_011750.1"/>
</dbReference>
<dbReference type="RefSeq" id="YP_002407861.1">
    <property type="nucleotide sequence ID" value="NC_011750.1"/>
</dbReference>
<dbReference type="SMR" id="B7NJF3"/>
<dbReference type="STRING" id="585057.ECIAI39_1883"/>
<dbReference type="GeneID" id="93776245"/>
<dbReference type="KEGG" id="ect:ECIAI39_1883"/>
<dbReference type="PATRIC" id="fig|585057.6.peg.1962"/>
<dbReference type="HOGENOM" id="CLU_017584_9_4_6"/>
<dbReference type="Proteomes" id="UP000000749">
    <property type="component" value="Chromosome"/>
</dbReference>
<dbReference type="GO" id="GO:0005737">
    <property type="term" value="C:cytoplasm"/>
    <property type="evidence" value="ECO:0007669"/>
    <property type="project" value="UniProtKB-SubCell"/>
</dbReference>
<dbReference type="GO" id="GO:0003677">
    <property type="term" value="F:DNA binding"/>
    <property type="evidence" value="ECO:0007669"/>
    <property type="project" value="UniProtKB-KW"/>
</dbReference>
<dbReference type="GO" id="GO:0003700">
    <property type="term" value="F:DNA-binding transcription factor activity"/>
    <property type="evidence" value="ECO:0007669"/>
    <property type="project" value="UniProtKB-UniRule"/>
</dbReference>
<dbReference type="GO" id="GO:0000062">
    <property type="term" value="F:fatty-acyl-CoA binding"/>
    <property type="evidence" value="ECO:0007669"/>
    <property type="project" value="InterPro"/>
</dbReference>
<dbReference type="GO" id="GO:0006631">
    <property type="term" value="P:fatty acid metabolic process"/>
    <property type="evidence" value="ECO:0007669"/>
    <property type="project" value="UniProtKB-KW"/>
</dbReference>
<dbReference type="GO" id="GO:0019217">
    <property type="term" value="P:regulation of fatty acid metabolic process"/>
    <property type="evidence" value="ECO:0007669"/>
    <property type="project" value="UniProtKB-UniRule"/>
</dbReference>
<dbReference type="CDD" id="cd07377">
    <property type="entry name" value="WHTH_GntR"/>
    <property type="match status" value="1"/>
</dbReference>
<dbReference type="FunFam" id="1.10.10.10:FF:000036">
    <property type="entry name" value="Fatty acid metabolism regulator protein"/>
    <property type="match status" value="1"/>
</dbReference>
<dbReference type="FunFam" id="1.20.120.530:FF:000003">
    <property type="entry name" value="Fatty acid metabolism regulator protein"/>
    <property type="match status" value="1"/>
</dbReference>
<dbReference type="Gene3D" id="1.20.120.530">
    <property type="entry name" value="GntR ligand-binding domain-like"/>
    <property type="match status" value="1"/>
</dbReference>
<dbReference type="Gene3D" id="1.10.10.10">
    <property type="entry name" value="Winged helix-like DNA-binding domain superfamily/Winged helix DNA-binding domain"/>
    <property type="match status" value="1"/>
</dbReference>
<dbReference type="HAMAP" id="MF_00696">
    <property type="entry name" value="HTH_FadR"/>
    <property type="match status" value="1"/>
</dbReference>
<dbReference type="InterPro" id="IPR014178">
    <property type="entry name" value="FA-response_TF_FadR"/>
</dbReference>
<dbReference type="InterPro" id="IPR028374">
    <property type="entry name" value="FadR_C"/>
</dbReference>
<dbReference type="InterPro" id="IPR008920">
    <property type="entry name" value="TF_FadR/GntR_C"/>
</dbReference>
<dbReference type="InterPro" id="IPR000524">
    <property type="entry name" value="Tscrpt_reg_HTH_GntR"/>
</dbReference>
<dbReference type="InterPro" id="IPR036388">
    <property type="entry name" value="WH-like_DNA-bd_sf"/>
</dbReference>
<dbReference type="InterPro" id="IPR036390">
    <property type="entry name" value="WH_DNA-bd_sf"/>
</dbReference>
<dbReference type="NCBIfam" id="TIGR02812">
    <property type="entry name" value="fadR_gamma"/>
    <property type="match status" value="1"/>
</dbReference>
<dbReference type="NCBIfam" id="NF003444">
    <property type="entry name" value="PRK04984.1"/>
    <property type="match status" value="1"/>
</dbReference>
<dbReference type="PANTHER" id="PTHR43537:SF52">
    <property type="entry name" value="FATTY ACID METABOLISM REGULATOR PROTEIN"/>
    <property type="match status" value="1"/>
</dbReference>
<dbReference type="PANTHER" id="PTHR43537">
    <property type="entry name" value="TRANSCRIPTIONAL REGULATOR, GNTR FAMILY"/>
    <property type="match status" value="1"/>
</dbReference>
<dbReference type="Pfam" id="PF07840">
    <property type="entry name" value="FadR_C"/>
    <property type="match status" value="1"/>
</dbReference>
<dbReference type="Pfam" id="PF00392">
    <property type="entry name" value="GntR"/>
    <property type="match status" value="1"/>
</dbReference>
<dbReference type="PRINTS" id="PR00035">
    <property type="entry name" value="HTHGNTR"/>
</dbReference>
<dbReference type="SMART" id="SM00345">
    <property type="entry name" value="HTH_GNTR"/>
    <property type="match status" value="1"/>
</dbReference>
<dbReference type="SUPFAM" id="SSF48008">
    <property type="entry name" value="GntR ligand-binding domain-like"/>
    <property type="match status" value="1"/>
</dbReference>
<dbReference type="SUPFAM" id="SSF46785">
    <property type="entry name" value="Winged helix' DNA-binding domain"/>
    <property type="match status" value="1"/>
</dbReference>
<dbReference type="PROSITE" id="PS50949">
    <property type="entry name" value="HTH_GNTR"/>
    <property type="match status" value="1"/>
</dbReference>
<evidence type="ECO:0000255" key="1">
    <source>
        <dbReference type="HAMAP-Rule" id="MF_00696"/>
    </source>
</evidence>
<keyword id="KW-0010">Activator</keyword>
<keyword id="KW-0963">Cytoplasm</keyword>
<keyword id="KW-0238">DNA-binding</keyword>
<keyword id="KW-0276">Fatty acid metabolism</keyword>
<keyword id="KW-0443">Lipid metabolism</keyword>
<keyword id="KW-0678">Repressor</keyword>
<keyword id="KW-0804">Transcription</keyword>
<keyword id="KW-0805">Transcription regulation</keyword>
<gene>
    <name evidence="1" type="primary">fadR</name>
    <name type="ordered locus">ECIAI39_1883</name>
</gene>
<reference key="1">
    <citation type="journal article" date="2009" name="PLoS Genet.">
        <title>Organised genome dynamics in the Escherichia coli species results in highly diverse adaptive paths.</title>
        <authorList>
            <person name="Touchon M."/>
            <person name="Hoede C."/>
            <person name="Tenaillon O."/>
            <person name="Barbe V."/>
            <person name="Baeriswyl S."/>
            <person name="Bidet P."/>
            <person name="Bingen E."/>
            <person name="Bonacorsi S."/>
            <person name="Bouchier C."/>
            <person name="Bouvet O."/>
            <person name="Calteau A."/>
            <person name="Chiapello H."/>
            <person name="Clermont O."/>
            <person name="Cruveiller S."/>
            <person name="Danchin A."/>
            <person name="Diard M."/>
            <person name="Dossat C."/>
            <person name="Karoui M.E."/>
            <person name="Frapy E."/>
            <person name="Garry L."/>
            <person name="Ghigo J.M."/>
            <person name="Gilles A.M."/>
            <person name="Johnson J."/>
            <person name="Le Bouguenec C."/>
            <person name="Lescat M."/>
            <person name="Mangenot S."/>
            <person name="Martinez-Jehanne V."/>
            <person name="Matic I."/>
            <person name="Nassif X."/>
            <person name="Oztas S."/>
            <person name="Petit M.A."/>
            <person name="Pichon C."/>
            <person name="Rouy Z."/>
            <person name="Ruf C.S."/>
            <person name="Schneider D."/>
            <person name="Tourret J."/>
            <person name="Vacherie B."/>
            <person name="Vallenet D."/>
            <person name="Medigue C."/>
            <person name="Rocha E.P.C."/>
            <person name="Denamur E."/>
        </authorList>
    </citation>
    <scope>NUCLEOTIDE SEQUENCE [LARGE SCALE GENOMIC DNA]</scope>
    <source>
        <strain>IAI39 / ExPEC</strain>
    </source>
</reference>
<proteinExistence type="inferred from homology"/>
<accession>B7NJF3</accession>
<feature type="chain" id="PRO_1000132314" description="Fatty acid metabolism regulator protein">
    <location>
        <begin position="1"/>
        <end position="239"/>
    </location>
</feature>
<feature type="domain" description="HTH gntR-type" evidence="1">
    <location>
        <begin position="6"/>
        <end position="74"/>
    </location>
</feature>
<feature type="DNA-binding region" description="H-T-H motif" evidence="1">
    <location>
        <begin position="34"/>
        <end position="53"/>
    </location>
</feature>
<name>FADR_ECO7I</name>
<sequence length="239" mass="26969">MVIKAQSPAGFAEEYIIESIWNNRFPPGTILPAERELSELIGVTRTTLREVLQRLARDGWLTIQHGKPTKVNNFWETSGLNILETLARLDHESVPQLIDNLLSVRTNISTIFIRTAFRQHPDKAQEVLATANEVADHADAFAELDYNIFRGLAFASGNPIYGLILNGMKGLYTRIGRHYFANPEARSLALGFYHKLSALCSEGAHDQVYETVRRYGHESGEIWHRMQKNLPGDLAIQGR</sequence>